<organism>
    <name type="scientific">Serratia marcescens</name>
    <dbReference type="NCBI Taxonomy" id="615"/>
    <lineage>
        <taxon>Bacteria</taxon>
        <taxon>Pseudomonadati</taxon>
        <taxon>Pseudomonadota</taxon>
        <taxon>Gammaproteobacteria</taxon>
        <taxon>Enterobacterales</taxon>
        <taxon>Yersiniaceae</taxon>
        <taxon>Serratia</taxon>
    </lineage>
</organism>
<reference key="1">
    <citation type="journal article" date="1993" name="J. Bacteriol.">
        <title>Nucleotide sequence of the Serratia marcescens threonine operon and analysis of the threonine operon mutations which alter feedback inhibition of both aspartokinase I and homoserine dehydrogenase I.</title>
        <authorList>
            <person name="Omori K."/>
            <person name="Suzuki S."/>
            <person name="Komatsubara S."/>
        </authorList>
    </citation>
    <scope>NUCLEOTIDE SEQUENCE [GENOMIC DNA]</scope>
    <source>
        <strain>Sr41</strain>
    </source>
</reference>
<evidence type="ECO:0000250" key="1"/>
<evidence type="ECO:0000255" key="2"/>
<evidence type="ECO:0000305" key="3"/>
<feature type="chain" id="PRO_0000156602" description="Homoserine kinase">
    <location>
        <begin position="1"/>
        <end position="309"/>
    </location>
</feature>
<feature type="binding site" evidence="2">
    <location>
        <begin position="91"/>
        <end position="101"/>
    </location>
    <ligand>
        <name>ATP</name>
        <dbReference type="ChEBI" id="CHEBI:30616"/>
    </ligand>
</feature>
<sequence length="309" mass="33387">MVKVYAPASIGNVSVGFDVLGAAVSPIDGTLLGDCVSVEAAETFSLQNAGRFVSKLPAEPKENIVYQCWERFCQEIGREVPVAMRLEKNMPIGSGLGSSACSVVAGLMAMNEFCDRPLDKTTLLGLMGELEGRISGSVHYDNVAPCYLGGLQLMLEEEGIISQEVPCFDDWLWVMAYPGIKVSTAEARAILPAQYRRQDCISHGRYLAGFIHACHTRQPQLAAKLMQDVIAEPYRTRLLPGFAEARKAAQEIGALACGISGSGPTLFAVCNDGATAQRMAAWLQQHYLQNDEGFVHICRLDTAGARLLG</sequence>
<comment type="function">
    <text evidence="1">Catalyzes the ATP-dependent phosphorylation of L-homoserine to L-homoserine phosphate.</text>
</comment>
<comment type="catalytic activity">
    <reaction>
        <text>L-homoserine + ATP = O-phospho-L-homoserine + ADP + H(+)</text>
        <dbReference type="Rhea" id="RHEA:13985"/>
        <dbReference type="ChEBI" id="CHEBI:15378"/>
        <dbReference type="ChEBI" id="CHEBI:30616"/>
        <dbReference type="ChEBI" id="CHEBI:57476"/>
        <dbReference type="ChEBI" id="CHEBI:57590"/>
        <dbReference type="ChEBI" id="CHEBI:456216"/>
        <dbReference type="EC" id="2.7.1.39"/>
    </reaction>
</comment>
<comment type="pathway">
    <text>Amino-acid biosynthesis; L-threonine biosynthesis; L-threonine from L-aspartate: step 4/5.</text>
</comment>
<comment type="subcellular location">
    <subcellularLocation>
        <location evidence="3">Cytoplasm</location>
    </subcellularLocation>
</comment>
<comment type="similarity">
    <text evidence="3">Belongs to the GHMP kinase family. Homoserine kinase subfamily.</text>
</comment>
<keyword id="KW-0028">Amino-acid biosynthesis</keyword>
<keyword id="KW-0067">ATP-binding</keyword>
<keyword id="KW-0963">Cytoplasm</keyword>
<keyword id="KW-0418">Kinase</keyword>
<keyword id="KW-0547">Nucleotide-binding</keyword>
<keyword id="KW-0791">Threonine biosynthesis</keyword>
<keyword id="KW-0808">Transferase</keyword>
<protein>
    <recommendedName>
        <fullName>Homoserine kinase</fullName>
        <shortName>HK</shortName>
        <shortName>HSK</shortName>
        <ecNumber>2.7.1.39</ecNumber>
    </recommendedName>
</protein>
<proteinExistence type="inferred from homology"/>
<accession>P27722</accession>
<dbReference type="EC" id="2.7.1.39"/>
<dbReference type="EMBL" id="D10387">
    <property type="protein sequence ID" value="BAA38482.1"/>
    <property type="molecule type" value="Genomic_DNA"/>
</dbReference>
<dbReference type="EMBL" id="X60821">
    <property type="protein sequence ID" value="CAA43213.1"/>
    <property type="molecule type" value="Genomic_DNA"/>
</dbReference>
<dbReference type="PIR" id="C47057">
    <property type="entry name" value="C47057"/>
</dbReference>
<dbReference type="RefSeq" id="WP_004932993.1">
    <property type="nucleotide sequence ID" value="NZ_WUUW01000008.1"/>
</dbReference>
<dbReference type="SMR" id="P27722"/>
<dbReference type="STRING" id="273526.SMDB11_0002"/>
<dbReference type="GeneID" id="98186487"/>
<dbReference type="OrthoDB" id="9769912at2"/>
<dbReference type="UniPathway" id="UPA00050">
    <property type="reaction ID" value="UER00064"/>
</dbReference>
<dbReference type="GO" id="GO:0005737">
    <property type="term" value="C:cytoplasm"/>
    <property type="evidence" value="ECO:0007669"/>
    <property type="project" value="UniProtKB-SubCell"/>
</dbReference>
<dbReference type="GO" id="GO:0005524">
    <property type="term" value="F:ATP binding"/>
    <property type="evidence" value="ECO:0007669"/>
    <property type="project" value="UniProtKB-UniRule"/>
</dbReference>
<dbReference type="GO" id="GO:0004413">
    <property type="term" value="F:homoserine kinase activity"/>
    <property type="evidence" value="ECO:0007669"/>
    <property type="project" value="UniProtKB-UniRule"/>
</dbReference>
<dbReference type="GO" id="GO:0009088">
    <property type="term" value="P:threonine biosynthetic process"/>
    <property type="evidence" value="ECO:0007669"/>
    <property type="project" value="UniProtKB-UniRule"/>
</dbReference>
<dbReference type="FunFam" id="3.30.230.10:FF:000020">
    <property type="entry name" value="Homoserine kinase"/>
    <property type="match status" value="1"/>
</dbReference>
<dbReference type="FunFam" id="3.30.70.890:FF:000002">
    <property type="entry name" value="Homoserine kinase"/>
    <property type="match status" value="1"/>
</dbReference>
<dbReference type="Gene3D" id="3.30.230.10">
    <property type="match status" value="1"/>
</dbReference>
<dbReference type="Gene3D" id="3.30.70.890">
    <property type="entry name" value="GHMP kinase, C-terminal domain"/>
    <property type="match status" value="1"/>
</dbReference>
<dbReference type="HAMAP" id="MF_00384">
    <property type="entry name" value="Homoser_kinase"/>
    <property type="match status" value="1"/>
</dbReference>
<dbReference type="InterPro" id="IPR013750">
    <property type="entry name" value="GHMP_kinase_C_dom"/>
</dbReference>
<dbReference type="InterPro" id="IPR036554">
    <property type="entry name" value="GHMP_kinase_C_sf"/>
</dbReference>
<dbReference type="InterPro" id="IPR006204">
    <property type="entry name" value="GHMP_kinase_N_dom"/>
</dbReference>
<dbReference type="InterPro" id="IPR006203">
    <property type="entry name" value="GHMP_knse_ATP-bd_CS"/>
</dbReference>
<dbReference type="InterPro" id="IPR000870">
    <property type="entry name" value="Homoserine_kinase"/>
</dbReference>
<dbReference type="InterPro" id="IPR020568">
    <property type="entry name" value="Ribosomal_Su5_D2-typ_SF"/>
</dbReference>
<dbReference type="InterPro" id="IPR014721">
    <property type="entry name" value="Ribsml_uS5_D2-typ_fold_subgr"/>
</dbReference>
<dbReference type="NCBIfam" id="NF002288">
    <property type="entry name" value="PRK01212.1-4"/>
    <property type="match status" value="1"/>
</dbReference>
<dbReference type="NCBIfam" id="TIGR00191">
    <property type="entry name" value="thrB"/>
    <property type="match status" value="1"/>
</dbReference>
<dbReference type="PANTHER" id="PTHR20861:SF1">
    <property type="entry name" value="HOMOSERINE KINASE"/>
    <property type="match status" value="1"/>
</dbReference>
<dbReference type="PANTHER" id="PTHR20861">
    <property type="entry name" value="HOMOSERINE/4-DIPHOSPHOCYTIDYL-2-C-METHYL-D-ERYTHRITOL KINASE"/>
    <property type="match status" value="1"/>
</dbReference>
<dbReference type="Pfam" id="PF08544">
    <property type="entry name" value="GHMP_kinases_C"/>
    <property type="match status" value="1"/>
</dbReference>
<dbReference type="Pfam" id="PF00288">
    <property type="entry name" value="GHMP_kinases_N"/>
    <property type="match status" value="1"/>
</dbReference>
<dbReference type="PIRSF" id="PIRSF000676">
    <property type="entry name" value="Homoser_kin"/>
    <property type="match status" value="1"/>
</dbReference>
<dbReference type="PRINTS" id="PR00958">
    <property type="entry name" value="HOMSERKINASE"/>
</dbReference>
<dbReference type="SUPFAM" id="SSF55060">
    <property type="entry name" value="GHMP Kinase, C-terminal domain"/>
    <property type="match status" value="1"/>
</dbReference>
<dbReference type="SUPFAM" id="SSF54211">
    <property type="entry name" value="Ribosomal protein S5 domain 2-like"/>
    <property type="match status" value="1"/>
</dbReference>
<dbReference type="PROSITE" id="PS00627">
    <property type="entry name" value="GHMP_KINASES_ATP"/>
    <property type="match status" value="1"/>
</dbReference>
<name>KHSE_SERMA</name>
<gene>
    <name type="primary">thrB</name>
</gene>